<feature type="chain" id="PRO_0000134152" description="Small ribosomal subunit protein uS2">
    <location>
        <begin position="1"/>
        <end position="277"/>
    </location>
</feature>
<feature type="region of interest" description="Disordered" evidence="1">
    <location>
        <begin position="247"/>
        <end position="277"/>
    </location>
</feature>
<feature type="compositionally biased region" description="Acidic residues" evidence="1">
    <location>
        <begin position="253"/>
        <end position="264"/>
    </location>
</feature>
<feature type="compositionally biased region" description="Basic and acidic residues" evidence="1">
    <location>
        <begin position="265"/>
        <end position="277"/>
    </location>
</feature>
<dbReference type="EMBL" id="AE001363">
    <property type="protein sequence ID" value="AAD18835.1"/>
    <property type="molecule type" value="Genomic_DNA"/>
</dbReference>
<dbReference type="EMBL" id="AE002161">
    <property type="protein sequence ID" value="AAF37943.1"/>
    <property type="molecule type" value="Genomic_DNA"/>
</dbReference>
<dbReference type="EMBL" id="BA000008">
    <property type="protein sequence ID" value="BAA98903.1"/>
    <property type="molecule type" value="Genomic_DNA"/>
</dbReference>
<dbReference type="EMBL" id="AE009440">
    <property type="protein sequence ID" value="AAP98652.1"/>
    <property type="molecule type" value="Genomic_DNA"/>
</dbReference>
<dbReference type="PIR" id="E86577">
    <property type="entry name" value="E86577"/>
</dbReference>
<dbReference type="PIR" id="H72044">
    <property type="entry name" value="H72044"/>
</dbReference>
<dbReference type="RefSeq" id="NP_224892.1">
    <property type="nucleotide sequence ID" value="NC_000922.1"/>
</dbReference>
<dbReference type="RefSeq" id="WP_010883334.1">
    <property type="nucleotide sequence ID" value="NZ_LN847257.1"/>
</dbReference>
<dbReference type="SMR" id="Q9Z7K9"/>
<dbReference type="STRING" id="406984.CPK_ORF00100"/>
<dbReference type="GeneID" id="45050748"/>
<dbReference type="KEGG" id="cpa:CP_0050"/>
<dbReference type="KEGG" id="cpj:rs2"/>
<dbReference type="KEGG" id="cpn:CPn_0696"/>
<dbReference type="KEGG" id="cpt:CpB0723"/>
<dbReference type="PATRIC" id="fig|115713.3.peg.770"/>
<dbReference type="eggNOG" id="COG0052">
    <property type="taxonomic scope" value="Bacteria"/>
</dbReference>
<dbReference type="HOGENOM" id="CLU_040318_1_3_0"/>
<dbReference type="OrthoDB" id="9808036at2"/>
<dbReference type="Proteomes" id="UP000000583">
    <property type="component" value="Chromosome"/>
</dbReference>
<dbReference type="Proteomes" id="UP000000801">
    <property type="component" value="Chromosome"/>
</dbReference>
<dbReference type="GO" id="GO:0022627">
    <property type="term" value="C:cytosolic small ribosomal subunit"/>
    <property type="evidence" value="ECO:0007669"/>
    <property type="project" value="TreeGrafter"/>
</dbReference>
<dbReference type="GO" id="GO:0003735">
    <property type="term" value="F:structural constituent of ribosome"/>
    <property type="evidence" value="ECO:0007669"/>
    <property type="project" value="InterPro"/>
</dbReference>
<dbReference type="GO" id="GO:0006412">
    <property type="term" value="P:translation"/>
    <property type="evidence" value="ECO:0007669"/>
    <property type="project" value="UniProtKB-UniRule"/>
</dbReference>
<dbReference type="CDD" id="cd01425">
    <property type="entry name" value="RPS2"/>
    <property type="match status" value="1"/>
</dbReference>
<dbReference type="Gene3D" id="3.40.50.10490">
    <property type="entry name" value="Glucose-6-phosphate isomerase like protein, domain 1"/>
    <property type="match status" value="1"/>
</dbReference>
<dbReference type="Gene3D" id="1.10.287.610">
    <property type="entry name" value="Helix hairpin bin"/>
    <property type="match status" value="1"/>
</dbReference>
<dbReference type="HAMAP" id="MF_00291_B">
    <property type="entry name" value="Ribosomal_uS2_B"/>
    <property type="match status" value="1"/>
</dbReference>
<dbReference type="InterPro" id="IPR001865">
    <property type="entry name" value="Ribosomal_uS2"/>
</dbReference>
<dbReference type="InterPro" id="IPR005706">
    <property type="entry name" value="Ribosomal_uS2_bac/mit/plastid"/>
</dbReference>
<dbReference type="InterPro" id="IPR018130">
    <property type="entry name" value="Ribosomal_uS2_CS"/>
</dbReference>
<dbReference type="InterPro" id="IPR023591">
    <property type="entry name" value="Ribosomal_uS2_flav_dom_sf"/>
</dbReference>
<dbReference type="NCBIfam" id="TIGR01011">
    <property type="entry name" value="rpsB_bact"/>
    <property type="match status" value="1"/>
</dbReference>
<dbReference type="PANTHER" id="PTHR12534">
    <property type="entry name" value="30S RIBOSOMAL PROTEIN S2 PROKARYOTIC AND ORGANELLAR"/>
    <property type="match status" value="1"/>
</dbReference>
<dbReference type="PANTHER" id="PTHR12534:SF0">
    <property type="entry name" value="SMALL RIBOSOMAL SUBUNIT PROTEIN US2M"/>
    <property type="match status" value="1"/>
</dbReference>
<dbReference type="Pfam" id="PF00318">
    <property type="entry name" value="Ribosomal_S2"/>
    <property type="match status" value="1"/>
</dbReference>
<dbReference type="PRINTS" id="PR00395">
    <property type="entry name" value="RIBOSOMALS2"/>
</dbReference>
<dbReference type="SUPFAM" id="SSF52313">
    <property type="entry name" value="Ribosomal protein S2"/>
    <property type="match status" value="1"/>
</dbReference>
<dbReference type="PROSITE" id="PS00962">
    <property type="entry name" value="RIBOSOMAL_S2_1"/>
    <property type="match status" value="1"/>
</dbReference>
<dbReference type="PROSITE" id="PS00963">
    <property type="entry name" value="RIBOSOMAL_S2_2"/>
    <property type="match status" value="1"/>
</dbReference>
<organism>
    <name type="scientific">Chlamydia pneumoniae</name>
    <name type="common">Chlamydophila pneumoniae</name>
    <dbReference type="NCBI Taxonomy" id="83558"/>
    <lineage>
        <taxon>Bacteria</taxon>
        <taxon>Pseudomonadati</taxon>
        <taxon>Chlamydiota</taxon>
        <taxon>Chlamydiia</taxon>
        <taxon>Chlamydiales</taxon>
        <taxon>Chlamydiaceae</taxon>
        <taxon>Chlamydia/Chlamydophila group</taxon>
        <taxon>Chlamydia</taxon>
    </lineage>
</organism>
<accession>Q9Z7K9</accession>
<accession>Q9JQF5</accession>
<proteinExistence type="inferred from homology"/>
<sequence length="277" mass="31286">MESQSCKLTIKDLMSAGAHFGHQTRRWNPKMKLYIFEEKNGLYIINLAKTLQQLRNALPHIRKVIQDNKTVLFVGTKKQAKCVIREAAIEAGEFFIAERWLGGMLTNMTTIRNSIKTLDKIEKDLSRNQAYLTKKEAALLAKRHQKLLRNLEGIRYMKKAPGLLVVVDPSYEKIAVAEAKKLGIPVLALVDTNCDPTPIDHVIPCNDDSLKSIRLIINVIKENIIEAKHKLGIEIVSPVKSLEVPDLSAFESSQDDESDEENREEDLLAKKFDGEAN</sequence>
<comment type="similarity">
    <text evidence="2">Belongs to the universal ribosomal protein uS2 family.</text>
</comment>
<gene>
    <name type="primary">rpsB</name>
    <name type="synonym">rs2</name>
    <name type="ordered locus">CPn_0696</name>
    <name type="ordered locus">CP_0050</name>
    <name type="ordered locus">CpB0723</name>
</gene>
<keyword id="KW-0687">Ribonucleoprotein</keyword>
<keyword id="KW-0689">Ribosomal protein</keyword>
<name>RS2_CHLPN</name>
<reference key="1">
    <citation type="journal article" date="1999" name="Nat. Genet.">
        <title>Comparative genomes of Chlamydia pneumoniae and C. trachomatis.</title>
        <authorList>
            <person name="Kalman S."/>
            <person name="Mitchell W.P."/>
            <person name="Marathe R."/>
            <person name="Lammel C.J."/>
            <person name="Fan J."/>
            <person name="Hyman R.W."/>
            <person name="Olinger L."/>
            <person name="Grimwood J."/>
            <person name="Davis R.W."/>
            <person name="Stephens R.S."/>
        </authorList>
    </citation>
    <scope>NUCLEOTIDE SEQUENCE [LARGE SCALE GENOMIC DNA]</scope>
    <source>
        <strain>CWL029</strain>
    </source>
</reference>
<reference key="2">
    <citation type="journal article" date="2000" name="Nucleic Acids Res.">
        <title>Genome sequences of Chlamydia trachomatis MoPn and Chlamydia pneumoniae AR39.</title>
        <authorList>
            <person name="Read T.D."/>
            <person name="Brunham R.C."/>
            <person name="Shen C."/>
            <person name="Gill S.R."/>
            <person name="Heidelberg J.F."/>
            <person name="White O."/>
            <person name="Hickey E.K."/>
            <person name="Peterson J.D."/>
            <person name="Utterback T.R."/>
            <person name="Berry K.J."/>
            <person name="Bass S."/>
            <person name="Linher K.D."/>
            <person name="Weidman J.F."/>
            <person name="Khouri H.M."/>
            <person name="Craven B."/>
            <person name="Bowman C."/>
            <person name="Dodson R.J."/>
            <person name="Gwinn M.L."/>
            <person name="Nelson W.C."/>
            <person name="DeBoy R.T."/>
            <person name="Kolonay J.F."/>
            <person name="McClarty G."/>
            <person name="Salzberg S.L."/>
            <person name="Eisen J.A."/>
            <person name="Fraser C.M."/>
        </authorList>
    </citation>
    <scope>NUCLEOTIDE SEQUENCE [LARGE SCALE GENOMIC DNA]</scope>
    <source>
        <strain>AR39</strain>
    </source>
</reference>
<reference key="3">
    <citation type="journal article" date="2000" name="Nucleic Acids Res.">
        <title>Comparison of whole genome sequences of Chlamydia pneumoniae J138 from Japan and CWL029 from USA.</title>
        <authorList>
            <person name="Shirai M."/>
            <person name="Hirakawa H."/>
            <person name="Kimoto M."/>
            <person name="Tabuchi M."/>
            <person name="Kishi F."/>
            <person name="Ouchi K."/>
            <person name="Shiba T."/>
            <person name="Ishii K."/>
            <person name="Hattori M."/>
            <person name="Kuhara S."/>
            <person name="Nakazawa T."/>
        </authorList>
    </citation>
    <scope>NUCLEOTIDE SEQUENCE [LARGE SCALE GENOMIC DNA]</scope>
    <source>
        <strain>J138</strain>
    </source>
</reference>
<reference key="4">
    <citation type="submission" date="2002-05" db="EMBL/GenBank/DDBJ databases">
        <title>The genome sequence of Chlamydia pneumoniae TW183 and comparison with other Chlamydia strains based on whole genome sequence analysis.</title>
        <authorList>
            <person name="Geng M.M."/>
            <person name="Schuhmacher A."/>
            <person name="Muehldorfer I."/>
            <person name="Bensch K.W."/>
            <person name="Schaefer K.P."/>
            <person name="Schneider S."/>
            <person name="Pohl T."/>
            <person name="Essig A."/>
            <person name="Marre R."/>
            <person name="Melchers K."/>
        </authorList>
    </citation>
    <scope>NUCLEOTIDE SEQUENCE [LARGE SCALE GENOMIC DNA]</scope>
    <source>
        <strain>TW-183</strain>
    </source>
</reference>
<protein>
    <recommendedName>
        <fullName evidence="2">Small ribosomal subunit protein uS2</fullName>
    </recommendedName>
    <alternativeName>
        <fullName>30S ribosomal protein S2</fullName>
    </alternativeName>
</protein>
<evidence type="ECO:0000256" key="1">
    <source>
        <dbReference type="SAM" id="MobiDB-lite"/>
    </source>
</evidence>
<evidence type="ECO:0000305" key="2"/>